<protein>
    <recommendedName>
        <fullName>B melanoma antigen 4</fullName>
    </recommendedName>
    <alternativeName>
        <fullName>Cancer/testis antigen 2.4</fullName>
        <shortName>CT2.4</shortName>
    </alternativeName>
</protein>
<keyword id="KW-1185">Reference proteome</keyword>
<keyword id="KW-0964">Secreted</keyword>
<keyword id="KW-0732">Signal</keyword>
<name>BAGE4_HUMAN</name>
<accession>Q86Y28</accession>
<dbReference type="EMBL" id="AF339515">
    <property type="protein sequence ID" value="AAO32635.1"/>
    <property type="molecule type" value="mRNA"/>
</dbReference>
<dbReference type="RefSeq" id="NP_859055.1">
    <property type="nucleotide sequence ID" value="NM_181704.1"/>
</dbReference>
<dbReference type="BioMuta" id="HGNC:15730"/>
<dbReference type="DMDM" id="37537779"/>
<dbReference type="MassIVE" id="Q86Y28"/>
<dbReference type="DNASU" id="85317"/>
<dbReference type="GeneID" id="85317"/>
<dbReference type="KEGG" id="hsa:85317"/>
<dbReference type="AGR" id="HGNC:15730"/>
<dbReference type="CTD" id="85317"/>
<dbReference type="GeneCards" id="BAGE4"/>
<dbReference type="HGNC" id="HGNC:15730">
    <property type="gene designation" value="BAGE4"/>
</dbReference>
<dbReference type="neXtProt" id="NX_Q86Y28"/>
<dbReference type="PharmGKB" id="PA25245"/>
<dbReference type="InParanoid" id="Q86Y28"/>
<dbReference type="PhylomeDB" id="Q86Y28"/>
<dbReference type="PathwayCommons" id="Q86Y28"/>
<dbReference type="SignaLink" id="Q86Y28"/>
<dbReference type="BioGRID-ORCS" id="85317">
    <property type="hits" value="7 hits in 56 CRISPR screens"/>
</dbReference>
<dbReference type="GenomeRNAi" id="85317"/>
<dbReference type="Pharos" id="Q86Y28">
    <property type="development level" value="Tdark"/>
</dbReference>
<dbReference type="PRO" id="PR:Q86Y28"/>
<dbReference type="Proteomes" id="UP000005640">
    <property type="component" value="Unplaced"/>
</dbReference>
<dbReference type="GO" id="GO:0005576">
    <property type="term" value="C:extracellular region"/>
    <property type="evidence" value="ECO:0007669"/>
    <property type="project" value="UniProtKB-SubCell"/>
</dbReference>
<dbReference type="InterPro" id="IPR012530">
    <property type="entry name" value="BAGE-like"/>
</dbReference>
<dbReference type="Pfam" id="PF08180">
    <property type="entry name" value="BAGE"/>
    <property type="match status" value="1"/>
</dbReference>
<comment type="function">
    <text>Unknown. Candidate gene encoding tumor antigens.</text>
</comment>
<comment type="subcellular location">
    <subcellularLocation>
        <location evidence="2">Secreted</location>
    </subcellularLocation>
</comment>
<comment type="tissue specificity">
    <text>Not expressed in normal tissues except in testis. Expressed in melanoma, bladder and lung carcinomas.</text>
</comment>
<comment type="miscellaneous">
    <text>The ancestral BAGE gene was generated by juxtacentromeric reshuffling of the KMT2C/MLL3 gene. The BAGE family was expanded by juxtacentromeric movement and/or acrocentric exchanges. BAGE family is composed of expressed genes that map to the juxtacentromeric regions of chromosomes 13 and 21 and of unexpressed gene fragments that scattered in the juxtacentromeric regions of several chromosomes, including chromosomes 9, 13, 18 and 21.</text>
</comment>
<comment type="similarity">
    <text evidence="2">Belongs to the BAGE family.</text>
</comment>
<gene>
    <name type="primary">BAGE4</name>
    <name type="synonym">MLL3P</name>
</gene>
<evidence type="ECO:0000255" key="1"/>
<evidence type="ECO:0000305" key="2"/>
<sequence>MAAGAVFLALSAQLLQARLMKEESPVVSWWLEPEDGTAL</sequence>
<proteinExistence type="evidence at transcript level"/>
<reference key="1">
    <citation type="submission" date="2001-01" db="EMBL/GenBank/DDBJ databases">
        <title>BAGE a family of centromeric genes coding for tumor antigens.</title>
        <authorList>
            <person name="Ruault M."/>
            <person name="Rocchi M."/>
            <person name="Boyle S."/>
            <person name="Roizes G."/>
            <person name="van der Bruggen P."/>
            <person name="De Sario A."/>
        </authorList>
    </citation>
    <scope>NUCLEOTIDE SEQUENCE [MRNA]</scope>
    <source>
        <tissue>Testis</tissue>
    </source>
</reference>
<feature type="signal peptide" evidence="1">
    <location>
        <begin position="1"/>
        <end position="17"/>
    </location>
</feature>
<feature type="chain" id="PRO_0000020777" description="B melanoma antigen 4">
    <location>
        <begin position="18"/>
        <end position="39"/>
    </location>
</feature>
<organism>
    <name type="scientific">Homo sapiens</name>
    <name type="common">Human</name>
    <dbReference type="NCBI Taxonomy" id="9606"/>
    <lineage>
        <taxon>Eukaryota</taxon>
        <taxon>Metazoa</taxon>
        <taxon>Chordata</taxon>
        <taxon>Craniata</taxon>
        <taxon>Vertebrata</taxon>
        <taxon>Euteleostomi</taxon>
        <taxon>Mammalia</taxon>
        <taxon>Eutheria</taxon>
        <taxon>Euarchontoglires</taxon>
        <taxon>Primates</taxon>
        <taxon>Haplorrhini</taxon>
        <taxon>Catarrhini</taxon>
        <taxon>Hominidae</taxon>
        <taxon>Homo</taxon>
    </lineage>
</organism>